<gene>
    <name evidence="1" type="primary">dadA</name>
    <name type="ordered locus">Bcep1808_0985</name>
</gene>
<keyword id="KW-0274">FAD</keyword>
<keyword id="KW-0285">Flavoprotein</keyword>
<keyword id="KW-0560">Oxidoreductase</keyword>
<sequence>MRVVILGSGVVGVASAYYLARAGHEVTVIDREAGPALDTSFANAGQISPGYAAPWAAPGVPLKAVKWMFEKHAPLAIRLDGTRFQLQWMWQMLRNCTPERYAVNKGRMVRLAEYSRDCLQALRADTGIEYEGRTGGTLQLFRSQQQLDGAAKDIAVLREANVPFELLSPAELKNAEPALAAVSHKLTGGLRLPGDETGDCQLFTTRLAALAESLGVKFRYNTPIDALAIAGGKIAGVQCGSETVRADAYVVALGSYSTNFVSKLMKIPVYPLKGYSITAPIVNEAAAPVSTVLDETYKIAITRFDQRIRVGGMAEIVGFDKKLRAARRETLEMCVNDLFPGGGDTSKATFWTGLRPMTPDGTPIVGRTPVSNLFMNTGHGTLGWTMSCGSGQLLADLISGKKPAIQADDLSVHRYLNEVAGQTRPAYA</sequence>
<evidence type="ECO:0000255" key="1">
    <source>
        <dbReference type="HAMAP-Rule" id="MF_01202"/>
    </source>
</evidence>
<proteinExistence type="inferred from homology"/>
<feature type="chain" id="PRO_1000066085" description="D-amino acid dehydrogenase">
    <location>
        <begin position="1"/>
        <end position="428"/>
    </location>
</feature>
<feature type="binding site" evidence="1">
    <location>
        <begin position="3"/>
        <end position="17"/>
    </location>
    <ligand>
        <name>FAD</name>
        <dbReference type="ChEBI" id="CHEBI:57692"/>
    </ligand>
</feature>
<dbReference type="EC" id="1.4.99.-" evidence="1"/>
<dbReference type="EMBL" id="CP000614">
    <property type="protein sequence ID" value="ABO53996.1"/>
    <property type="molecule type" value="Genomic_DNA"/>
</dbReference>
<dbReference type="SMR" id="A4JCJ3"/>
<dbReference type="KEGG" id="bvi:Bcep1808_0985"/>
<dbReference type="eggNOG" id="COG0665">
    <property type="taxonomic scope" value="Bacteria"/>
</dbReference>
<dbReference type="HOGENOM" id="CLU_007884_9_2_4"/>
<dbReference type="UniPathway" id="UPA00043">
    <property type="reaction ID" value="UER00498"/>
</dbReference>
<dbReference type="Proteomes" id="UP000002287">
    <property type="component" value="Chromosome 1"/>
</dbReference>
<dbReference type="GO" id="GO:0005737">
    <property type="term" value="C:cytoplasm"/>
    <property type="evidence" value="ECO:0007669"/>
    <property type="project" value="TreeGrafter"/>
</dbReference>
<dbReference type="GO" id="GO:0005886">
    <property type="term" value="C:plasma membrane"/>
    <property type="evidence" value="ECO:0007669"/>
    <property type="project" value="TreeGrafter"/>
</dbReference>
<dbReference type="GO" id="GO:0008718">
    <property type="term" value="F:D-amino-acid dehydrogenase activity"/>
    <property type="evidence" value="ECO:0007669"/>
    <property type="project" value="UniProtKB-UniRule"/>
</dbReference>
<dbReference type="GO" id="GO:0055130">
    <property type="term" value="P:D-alanine catabolic process"/>
    <property type="evidence" value="ECO:0007669"/>
    <property type="project" value="UniProtKB-UniPathway"/>
</dbReference>
<dbReference type="FunFam" id="3.50.50.60:FF:000020">
    <property type="entry name" value="D-amino acid dehydrogenase"/>
    <property type="match status" value="1"/>
</dbReference>
<dbReference type="Gene3D" id="3.30.9.10">
    <property type="entry name" value="D-Amino Acid Oxidase, subunit A, domain 2"/>
    <property type="match status" value="1"/>
</dbReference>
<dbReference type="Gene3D" id="3.50.50.60">
    <property type="entry name" value="FAD/NAD(P)-binding domain"/>
    <property type="match status" value="2"/>
</dbReference>
<dbReference type="HAMAP" id="MF_01202">
    <property type="entry name" value="DadA"/>
    <property type="match status" value="1"/>
</dbReference>
<dbReference type="InterPro" id="IPR023080">
    <property type="entry name" value="DadA"/>
</dbReference>
<dbReference type="InterPro" id="IPR006076">
    <property type="entry name" value="FAD-dep_OxRdtase"/>
</dbReference>
<dbReference type="InterPro" id="IPR036188">
    <property type="entry name" value="FAD/NAD-bd_sf"/>
</dbReference>
<dbReference type="NCBIfam" id="NF001933">
    <property type="entry name" value="PRK00711.1"/>
    <property type="match status" value="1"/>
</dbReference>
<dbReference type="PANTHER" id="PTHR13847:SF280">
    <property type="entry name" value="D-AMINO ACID DEHYDROGENASE"/>
    <property type="match status" value="1"/>
</dbReference>
<dbReference type="PANTHER" id="PTHR13847">
    <property type="entry name" value="SARCOSINE DEHYDROGENASE-RELATED"/>
    <property type="match status" value="1"/>
</dbReference>
<dbReference type="Pfam" id="PF01266">
    <property type="entry name" value="DAO"/>
    <property type="match status" value="1"/>
</dbReference>
<dbReference type="SUPFAM" id="SSF54373">
    <property type="entry name" value="FAD-linked reductases, C-terminal domain"/>
    <property type="match status" value="1"/>
</dbReference>
<dbReference type="SUPFAM" id="SSF51905">
    <property type="entry name" value="FAD/NAD(P)-binding domain"/>
    <property type="match status" value="1"/>
</dbReference>
<accession>A4JCJ3</accession>
<organism>
    <name type="scientific">Burkholderia vietnamiensis (strain G4 / LMG 22486)</name>
    <name type="common">Burkholderia cepacia (strain R1808)</name>
    <dbReference type="NCBI Taxonomy" id="269482"/>
    <lineage>
        <taxon>Bacteria</taxon>
        <taxon>Pseudomonadati</taxon>
        <taxon>Pseudomonadota</taxon>
        <taxon>Betaproteobacteria</taxon>
        <taxon>Burkholderiales</taxon>
        <taxon>Burkholderiaceae</taxon>
        <taxon>Burkholderia</taxon>
        <taxon>Burkholderia cepacia complex</taxon>
    </lineage>
</organism>
<protein>
    <recommendedName>
        <fullName evidence="1">D-amino acid dehydrogenase</fullName>
        <ecNumber evidence="1">1.4.99.-</ecNumber>
    </recommendedName>
</protein>
<reference key="1">
    <citation type="submission" date="2007-03" db="EMBL/GenBank/DDBJ databases">
        <title>Complete sequence of chromosome 1 of Burkholderia vietnamiensis G4.</title>
        <authorList>
            <consortium name="US DOE Joint Genome Institute"/>
            <person name="Copeland A."/>
            <person name="Lucas S."/>
            <person name="Lapidus A."/>
            <person name="Barry K."/>
            <person name="Detter J.C."/>
            <person name="Glavina del Rio T."/>
            <person name="Hammon N."/>
            <person name="Israni S."/>
            <person name="Dalin E."/>
            <person name="Tice H."/>
            <person name="Pitluck S."/>
            <person name="Chain P."/>
            <person name="Malfatti S."/>
            <person name="Shin M."/>
            <person name="Vergez L."/>
            <person name="Schmutz J."/>
            <person name="Larimer F."/>
            <person name="Land M."/>
            <person name="Hauser L."/>
            <person name="Kyrpides N."/>
            <person name="Tiedje J."/>
            <person name="Richardson P."/>
        </authorList>
    </citation>
    <scope>NUCLEOTIDE SEQUENCE [LARGE SCALE GENOMIC DNA]</scope>
    <source>
        <strain>G4 / LMG 22486</strain>
    </source>
</reference>
<comment type="function">
    <text evidence="1">Oxidative deamination of D-amino acids.</text>
</comment>
<comment type="catalytic activity">
    <reaction evidence="1">
        <text>a D-alpha-amino acid + A + H2O = a 2-oxocarboxylate + AH2 + NH4(+)</text>
        <dbReference type="Rhea" id="RHEA:18125"/>
        <dbReference type="ChEBI" id="CHEBI:13193"/>
        <dbReference type="ChEBI" id="CHEBI:15377"/>
        <dbReference type="ChEBI" id="CHEBI:17499"/>
        <dbReference type="ChEBI" id="CHEBI:28938"/>
        <dbReference type="ChEBI" id="CHEBI:35179"/>
        <dbReference type="ChEBI" id="CHEBI:59871"/>
    </reaction>
</comment>
<comment type="cofactor">
    <cofactor evidence="1">
        <name>FAD</name>
        <dbReference type="ChEBI" id="CHEBI:57692"/>
    </cofactor>
</comment>
<comment type="pathway">
    <text>Amino-acid degradation; D-alanine degradation; NH(3) and pyruvate from D-alanine: step 1/1.</text>
</comment>
<comment type="similarity">
    <text evidence="1">Belongs to the DadA oxidoreductase family.</text>
</comment>
<name>DADA_BURVG</name>